<name>CYB_MAMPR</name>
<gene>
    <name type="primary">MT-CYB</name>
    <name type="synonym">COB</name>
    <name type="synonym">CYTB</name>
    <name type="synonym">MTCYB</name>
</gene>
<evidence type="ECO:0000250" key="1"/>
<evidence type="ECO:0000250" key="2">
    <source>
        <dbReference type="UniProtKB" id="P00157"/>
    </source>
</evidence>
<evidence type="ECO:0000255" key="3">
    <source>
        <dbReference type="PROSITE-ProRule" id="PRU00967"/>
    </source>
</evidence>
<evidence type="ECO:0000255" key="4">
    <source>
        <dbReference type="PROSITE-ProRule" id="PRU00968"/>
    </source>
</evidence>
<evidence type="ECO:0000305" key="5"/>
<keyword id="KW-0249">Electron transport</keyword>
<keyword id="KW-0952">Extinct organism protein</keyword>
<keyword id="KW-0349">Heme</keyword>
<keyword id="KW-0408">Iron</keyword>
<keyword id="KW-0472">Membrane</keyword>
<keyword id="KW-0479">Metal-binding</keyword>
<keyword id="KW-0496">Mitochondrion</keyword>
<keyword id="KW-0999">Mitochondrion inner membrane</keyword>
<keyword id="KW-0679">Respiratory chain</keyword>
<keyword id="KW-0812">Transmembrane</keyword>
<keyword id="KW-1133">Transmembrane helix</keyword>
<keyword id="KW-0813">Transport</keyword>
<keyword id="KW-0830">Ubiquinone</keyword>
<dbReference type="EMBL" id="D50842">
    <property type="protein sequence ID" value="BAA25008.1"/>
    <property type="molecule type" value="Genomic_DNA"/>
</dbReference>
<dbReference type="EMBL" id="DQ188829">
    <property type="protein sequence ID" value="ABA29796.1"/>
    <property type="molecule type" value="Genomic_DNA"/>
</dbReference>
<dbReference type="EMBL" id="DQ316067">
    <property type="protein sequence ID" value="ABC17890.1"/>
    <property type="molecule type" value="Genomic_DNA"/>
</dbReference>
<dbReference type="EMBL" id="D83047">
    <property type="protein sequence ID" value="BAA20277.1"/>
    <property type="molecule type" value="Genomic_DNA"/>
</dbReference>
<dbReference type="EMBL" id="U79411">
    <property type="protein sequence ID" value="AAB38284.1"/>
    <property type="molecule type" value="Genomic_DNA"/>
</dbReference>
<dbReference type="EMBL" id="U23738">
    <property type="protein sequence ID" value="AAA73786.1"/>
    <property type="molecule type" value="Genomic_DNA"/>
</dbReference>
<dbReference type="EMBL" id="U23739">
    <property type="protein sequence ID" value="AAA73787.1"/>
    <property type="molecule type" value="Genomic_DNA"/>
</dbReference>
<dbReference type="EMBL" id="S72502">
    <property type="protein sequence ID" value="AAD14109.1"/>
    <property type="molecule type" value="Genomic_DNA"/>
</dbReference>
<dbReference type="RefSeq" id="YP_398766.1">
    <property type="nucleotide sequence ID" value="NC_007596.2"/>
</dbReference>
<dbReference type="SMR" id="P92658"/>
<dbReference type="GeneID" id="3773153"/>
<dbReference type="CTD" id="4519"/>
<dbReference type="GO" id="GO:0005743">
    <property type="term" value="C:mitochondrial inner membrane"/>
    <property type="evidence" value="ECO:0007669"/>
    <property type="project" value="UniProtKB-SubCell"/>
</dbReference>
<dbReference type="GO" id="GO:0045275">
    <property type="term" value="C:respiratory chain complex III"/>
    <property type="evidence" value="ECO:0007669"/>
    <property type="project" value="InterPro"/>
</dbReference>
<dbReference type="GO" id="GO:0046872">
    <property type="term" value="F:metal ion binding"/>
    <property type="evidence" value="ECO:0007669"/>
    <property type="project" value="UniProtKB-KW"/>
</dbReference>
<dbReference type="GO" id="GO:0008121">
    <property type="term" value="F:ubiquinol-cytochrome-c reductase activity"/>
    <property type="evidence" value="ECO:0007669"/>
    <property type="project" value="InterPro"/>
</dbReference>
<dbReference type="GO" id="GO:0006122">
    <property type="term" value="P:mitochondrial electron transport, ubiquinol to cytochrome c"/>
    <property type="evidence" value="ECO:0007669"/>
    <property type="project" value="TreeGrafter"/>
</dbReference>
<dbReference type="CDD" id="cd00290">
    <property type="entry name" value="cytochrome_b_C"/>
    <property type="match status" value="1"/>
</dbReference>
<dbReference type="CDD" id="cd00284">
    <property type="entry name" value="Cytochrome_b_N"/>
    <property type="match status" value="1"/>
</dbReference>
<dbReference type="FunFam" id="1.20.810.10:FF:000002">
    <property type="entry name" value="Cytochrome b"/>
    <property type="match status" value="1"/>
</dbReference>
<dbReference type="Gene3D" id="1.20.810.10">
    <property type="entry name" value="Cytochrome Bc1 Complex, Chain C"/>
    <property type="match status" value="1"/>
</dbReference>
<dbReference type="InterPro" id="IPR005798">
    <property type="entry name" value="Cyt_b/b6_C"/>
</dbReference>
<dbReference type="InterPro" id="IPR036150">
    <property type="entry name" value="Cyt_b/b6_C_sf"/>
</dbReference>
<dbReference type="InterPro" id="IPR005797">
    <property type="entry name" value="Cyt_b/b6_N"/>
</dbReference>
<dbReference type="InterPro" id="IPR027387">
    <property type="entry name" value="Cytb/b6-like_sf"/>
</dbReference>
<dbReference type="InterPro" id="IPR030689">
    <property type="entry name" value="Cytochrome_b"/>
</dbReference>
<dbReference type="InterPro" id="IPR048260">
    <property type="entry name" value="Cytochrome_b_C_euk/bac"/>
</dbReference>
<dbReference type="InterPro" id="IPR048259">
    <property type="entry name" value="Cytochrome_b_N_euk/bac"/>
</dbReference>
<dbReference type="InterPro" id="IPR016174">
    <property type="entry name" value="Di-haem_cyt_TM"/>
</dbReference>
<dbReference type="PANTHER" id="PTHR19271">
    <property type="entry name" value="CYTOCHROME B"/>
    <property type="match status" value="1"/>
</dbReference>
<dbReference type="PANTHER" id="PTHR19271:SF16">
    <property type="entry name" value="CYTOCHROME B"/>
    <property type="match status" value="1"/>
</dbReference>
<dbReference type="Pfam" id="PF00032">
    <property type="entry name" value="Cytochrom_B_C"/>
    <property type="match status" value="1"/>
</dbReference>
<dbReference type="Pfam" id="PF00033">
    <property type="entry name" value="Cytochrome_B"/>
    <property type="match status" value="1"/>
</dbReference>
<dbReference type="PIRSF" id="PIRSF038885">
    <property type="entry name" value="COB"/>
    <property type="match status" value="1"/>
</dbReference>
<dbReference type="SUPFAM" id="SSF81648">
    <property type="entry name" value="a domain/subunit of cytochrome bc1 complex (Ubiquinol-cytochrome c reductase)"/>
    <property type="match status" value="1"/>
</dbReference>
<dbReference type="SUPFAM" id="SSF81342">
    <property type="entry name" value="Transmembrane di-heme cytochromes"/>
    <property type="match status" value="1"/>
</dbReference>
<dbReference type="PROSITE" id="PS51003">
    <property type="entry name" value="CYTB_CTER"/>
    <property type="match status" value="1"/>
</dbReference>
<dbReference type="PROSITE" id="PS51002">
    <property type="entry name" value="CYTB_NTER"/>
    <property type="match status" value="1"/>
</dbReference>
<reference key="1">
    <citation type="journal article" date="1998" name="J. Mol. Evol.">
        <title>Molecular phylogenetic inference of the woolly mammoth Mammuthus primigenius, based on complete sequences of mitochondrial cytochrome b and 12S ribosomal RNA genes.</title>
        <authorList>
            <person name="Noro M."/>
            <person name="Masuda R."/>
            <person name="Dubrovo I.A."/>
            <person name="Yoshida M.C."/>
            <person name="Kato M."/>
        </authorList>
    </citation>
    <scope>NUCLEOTIDE SEQUENCE [GENOMIC DNA]</scope>
    <source>
        <tissue>Muscle</tissue>
    </source>
</reference>
<reference key="2">
    <citation type="journal article" date="2006" name="Nature">
        <title>Multiplex amplification of the mammoth mitochondrial genome and the evolution of Elephantidae.</title>
        <authorList>
            <person name="Krause J."/>
            <person name="Dear P.H."/>
            <person name="Pollack J.L."/>
            <person name="Slatkin M."/>
            <person name="Spriggs H."/>
            <person name="Barnes I."/>
            <person name="Lister A.M."/>
            <person name="Ebersberger I."/>
            <person name="Paeaebo S."/>
            <person name="Hofreiter M."/>
        </authorList>
    </citation>
    <scope>NUCLEOTIDE SEQUENCE [GENOMIC DNA]</scope>
</reference>
<reference key="3">
    <citation type="journal article" date="2006" name="PLoS Biol.">
        <title>Complete mitochondrial genome and phylogeny of Pleistocene mammoth Mammuthus primigenius.</title>
        <authorList>
            <person name="Rogaev E.I."/>
            <person name="Moliaka Y.K."/>
            <person name="Malyarchuk B.A."/>
            <person name="Kondrashov F.A."/>
            <person name="Derenko M.V."/>
            <person name="Chumakov I."/>
            <person name="Grigorenko A.P."/>
        </authorList>
    </citation>
    <scope>NUCLEOTIDE SEQUENCE [GENOMIC DNA]</scope>
    <source>
        <tissue>Muscle</tissue>
    </source>
</reference>
<reference key="4">
    <citation type="journal article" date="1997" name="J. Mol. Evol.">
        <title>Phylogenetic position of mammoth and Steller's sea cow within Tethytheria demonstrated by mitochondrial DNA sequences.</title>
        <authorList>
            <person name="Ozawa T."/>
            <person name="Hayashi S."/>
            <person name="Mikhelson V.M."/>
        </authorList>
    </citation>
    <scope>NUCLEOTIDE SEQUENCE [GENOMIC DNA] OF 1-335</scope>
    <source>
        <tissue>Muscle</tissue>
    </source>
</reference>
<reference key="5">
    <citation type="submission" date="1997-01" db="EMBL/GenBank/DDBJ databases">
        <authorList>
            <person name="Derenko M."/>
            <person name="Malyarchuk B."/>
            <person name="Shields G.F."/>
        </authorList>
    </citation>
    <scope>NUCLEOTIDE SEQUENCE [GENOMIC DNA] OF 34-143</scope>
</reference>
<reference key="6">
    <citation type="submission" date="1995-08" db="EMBL/GenBank/DDBJ databases">
        <authorList>
            <person name="Yang H."/>
            <person name="Golenberg E.M."/>
            <person name="Shoshani J."/>
        </authorList>
    </citation>
    <scope>NUCLEOTIDE SEQUENCE [GENOMIC DNA] OF 32-106</scope>
    <source>
        <strain>Isolate allele Fairbank</strain>
        <strain>Isolate allele Lyakhovskiy</strain>
    </source>
</reference>
<reference key="7">
    <citation type="journal article" date="1994" name="Nature">
        <title>DNA from ancient mammoth bones.</title>
        <authorList>
            <person name="Hagelberg E."/>
            <person name="Thomas M.G."/>
            <person name="Cook C.E. Jr."/>
            <person name="Sher A.V."/>
            <person name="Baryshnikov G.F."/>
            <person name="Lister A.M."/>
        </authorList>
    </citation>
    <scope>NUCLEOTIDE SEQUENCE [GENOMIC DNA] OF 33-114</scope>
    <source>
        <tissue>Bone</tissue>
    </source>
</reference>
<feature type="chain" id="PRO_0000061150" description="Cytochrome b">
    <location>
        <begin position="1"/>
        <end position="378"/>
    </location>
</feature>
<feature type="transmembrane region" description="Helical" evidence="2">
    <location>
        <begin position="33"/>
        <end position="53"/>
    </location>
</feature>
<feature type="transmembrane region" description="Helical" evidence="2">
    <location>
        <begin position="77"/>
        <end position="98"/>
    </location>
</feature>
<feature type="transmembrane region" description="Helical" evidence="2">
    <location>
        <begin position="113"/>
        <end position="133"/>
    </location>
</feature>
<feature type="transmembrane region" description="Helical" evidence="2">
    <location>
        <begin position="178"/>
        <end position="198"/>
    </location>
</feature>
<feature type="transmembrane region" description="Helical" evidence="2">
    <location>
        <begin position="226"/>
        <end position="246"/>
    </location>
</feature>
<feature type="transmembrane region" description="Helical" evidence="2">
    <location>
        <begin position="288"/>
        <end position="308"/>
    </location>
</feature>
<feature type="transmembrane region" description="Helical" evidence="2">
    <location>
        <begin position="320"/>
        <end position="340"/>
    </location>
</feature>
<feature type="transmembrane region" description="Helical" evidence="2">
    <location>
        <begin position="347"/>
        <end position="367"/>
    </location>
</feature>
<feature type="binding site" description="axial binding residue" evidence="2">
    <location>
        <position position="83"/>
    </location>
    <ligand>
        <name>heme b</name>
        <dbReference type="ChEBI" id="CHEBI:60344"/>
        <label>b562</label>
    </ligand>
    <ligandPart>
        <name>Fe</name>
        <dbReference type="ChEBI" id="CHEBI:18248"/>
    </ligandPart>
</feature>
<feature type="binding site" description="axial binding residue" evidence="2">
    <location>
        <position position="97"/>
    </location>
    <ligand>
        <name>heme b</name>
        <dbReference type="ChEBI" id="CHEBI:60344"/>
        <label>b566</label>
    </ligand>
    <ligandPart>
        <name>Fe</name>
        <dbReference type="ChEBI" id="CHEBI:18248"/>
    </ligandPart>
</feature>
<feature type="binding site" description="axial binding residue" evidence="2">
    <location>
        <position position="182"/>
    </location>
    <ligand>
        <name>heme b</name>
        <dbReference type="ChEBI" id="CHEBI:60344"/>
        <label>b562</label>
    </ligand>
    <ligandPart>
        <name>Fe</name>
        <dbReference type="ChEBI" id="CHEBI:18248"/>
    </ligandPart>
</feature>
<feature type="binding site" description="axial binding residue" evidence="2">
    <location>
        <position position="196"/>
    </location>
    <ligand>
        <name>heme b</name>
        <dbReference type="ChEBI" id="CHEBI:60344"/>
        <label>b566</label>
    </ligand>
    <ligandPart>
        <name>Fe</name>
        <dbReference type="ChEBI" id="CHEBI:18248"/>
    </ligandPart>
</feature>
<feature type="binding site" evidence="2">
    <location>
        <position position="201"/>
    </location>
    <ligand>
        <name>a ubiquinone</name>
        <dbReference type="ChEBI" id="CHEBI:16389"/>
    </ligand>
</feature>
<feature type="sequence conflict" description="In Ref. 7; AAD14109." evidence="5" ref="7">
    <location>
        <begin position="95"/>
        <end position="96"/>
    </location>
</feature>
<feature type="sequence conflict" description="In Ref. 4; BAA20277." evidence="5" ref="4">
    <original>I</original>
    <variation>V</variation>
    <location>
        <position position="218"/>
    </location>
</feature>
<comment type="function">
    <text evidence="2">Component of the ubiquinol-cytochrome c reductase complex (complex III or cytochrome b-c1 complex) that is part of the mitochondrial respiratory chain. The b-c1 complex mediates electron transfer from ubiquinol to cytochrome c. Contributes to the generation of a proton gradient across the mitochondrial membrane that is then used for ATP synthesis.</text>
</comment>
<comment type="cofactor">
    <cofactor evidence="2">
        <name>heme b</name>
        <dbReference type="ChEBI" id="CHEBI:60344"/>
    </cofactor>
    <text evidence="2">Binds 2 heme b groups non-covalently.</text>
</comment>
<comment type="subunit">
    <text evidence="2">The cytochrome bc1 complex contains 11 subunits: 3 respiratory subunits (MT-CYB, CYC1 and UQCRFS1), 2 core proteins (UQCRC1 and UQCRC2) and 6 low-molecular weight proteins (UQCRH/QCR6, UQCRB/QCR7, UQCRQ/QCR8, UQCR10/QCR9, UQCR11/QCR10 and a cleavage product of UQCRFS1). This cytochrome bc1 complex then forms a dimer.</text>
</comment>
<comment type="subcellular location">
    <subcellularLocation>
        <location evidence="2">Mitochondrion inner membrane</location>
        <topology evidence="2">Multi-pass membrane protein</topology>
    </subcellularLocation>
</comment>
<comment type="miscellaneous">
    <text evidence="1">Heme 1 (or BL or b562) is low-potential and absorbs at about 562 nm, and heme 2 (or BH or b566) is high-potential and absorbs at about 566 nm.</text>
</comment>
<comment type="similarity">
    <text evidence="3 4">Belongs to the cytochrome b family.</text>
</comment>
<comment type="caution">
    <text evidence="2">The full-length protein contains only eight transmembrane helices, not nine as predicted by bioinformatics tools.</text>
</comment>
<organism>
    <name type="scientific">Mammuthus primigenius</name>
    <name type="common">Siberian woolly mammoth</name>
    <dbReference type="NCBI Taxonomy" id="37349"/>
    <lineage>
        <taxon>Eukaryota</taxon>
        <taxon>Metazoa</taxon>
        <taxon>Chordata</taxon>
        <taxon>Craniata</taxon>
        <taxon>Vertebrata</taxon>
        <taxon>Euteleostomi</taxon>
        <taxon>Mammalia</taxon>
        <taxon>Eutheria</taxon>
        <taxon>Afrotheria</taxon>
        <taxon>Proboscidea</taxon>
        <taxon>Elephantidae</taxon>
        <taxon>Mammuthus</taxon>
    </lineage>
</organism>
<sequence>MTHIRKSHPLLKILNKSFIDLPTPSNISTWWNFGSLLGACLITQILTGLFLAMHYTPDTMTAFSSMSHICRDVNYGWIIRQLHSNGASIFFLCLYTHIGRNIYYGSYLYSETWNTGIMLLLITMATAFMGYVLPWGQMSFWGATVITNLFSAIPYIGTDLVEWIWGGFSVDKATLNRFFALHFILPFTMIALAGVHLTFLHETGSNNPLGLTSDSDKIPFHPYYTIKDFLGLLILILFLLLLALLSPDMLGDPDNYMPADPLNTPLHIKPEWYFLFAYAILRSVPNKLGGVLALLLSILILGIMPLLHTSKHRSMMLRPLSQVLFWTLATDLLMLTWIGSQPVEYPYIIIGQMASILYFSIILAFLPIAGMIENYLIK</sequence>
<accession>P92658</accession>
<accession>Q35052</accession>
<accession>Q35053</accession>
<accession>Q36723</accession>
<accession>Q38PR0</accession>
<geneLocation type="mitochondrion"/>
<protein>
    <recommendedName>
        <fullName>Cytochrome b</fullName>
    </recommendedName>
    <alternativeName>
        <fullName>Complex III subunit 3</fullName>
    </alternativeName>
    <alternativeName>
        <fullName>Complex III subunit III</fullName>
    </alternativeName>
    <alternativeName>
        <fullName>Cytochrome b-c1 complex subunit 3</fullName>
    </alternativeName>
    <alternativeName>
        <fullName>Ubiquinol-cytochrome-c reductase complex cytochrome b subunit</fullName>
    </alternativeName>
</protein>
<proteinExistence type="inferred from homology"/>